<comment type="function">
    <text evidence="2">Has antibacterial activity against Gram-positive and Gram-negative bacteria. Probably acts by disturbing membrane functions with its amphipathic structure.</text>
</comment>
<comment type="subcellular location">
    <subcellularLocation>
        <location>Secreted</location>
    </subcellularLocation>
</comment>
<comment type="tissue specificity">
    <text evidence="1">Expressed in fat body and to a lesser extent in hemocyte and Malpighian tubules.</text>
</comment>
<comment type="developmental stage">
    <text evidence="1">A weak signal appears 1 hour after induction, maximum levels are reached by 8 hours and remain at a high level over a period of at least 48 hours.</text>
</comment>
<comment type="induction">
    <text evidence="1">By bacterial infection.</text>
</comment>
<comment type="mass spectrometry"/>
<comment type="similarity">
    <text evidence="3">Belongs to the moricin family.</text>
</comment>
<name>MOR2_BOMMO</name>
<proteinExistence type="evidence at protein level"/>
<accession>O96059</accession>
<accession>P81604</accession>
<protein>
    <recommendedName>
        <fullName>Moricin-2</fullName>
    </recommendedName>
</protein>
<reference key="1">
    <citation type="journal article" date="1999" name="Biochem. J.">
        <title>Inducible gene expression of moricin, a unique antibacterial peptide from the silkworm (Bombyx mori).</title>
        <authorList>
            <person name="Furukawa S."/>
            <person name="Tanaka H."/>
            <person name="Nakazawa H."/>
            <person name="Ishibashi J."/>
            <person name="Shono T."/>
            <person name="Yamakawa M."/>
        </authorList>
    </citation>
    <scope>NUCLEOTIDE SEQUENCE [GENOMIC DNA / MRNA]</scope>
    <scope>INDUCTION</scope>
    <scope>TISSUE SPECIFICITY</scope>
    <scope>DEVELOPMENTAL STAGE</scope>
    <source>
        <strain>CHU 602</strain>
        <strain>Tokai X Asahi</strain>
        <tissue>Fat body</tissue>
    </source>
</reference>
<reference key="2">
    <citation type="journal article" date="1995" name="J. Biol. Chem.">
        <title>Moricin, a novel type of antibacterial peptide isolated from the silkworm, Bombyx mori.</title>
        <authorList>
            <person name="Hara S."/>
            <person name="Yamakawa M."/>
        </authorList>
    </citation>
    <scope>PROTEIN SEQUENCE OF 25-66</scope>
    <scope>FUNCTION</scope>
    <scope>MASS SPECTROMETRY</scope>
    <source>
        <strain>Tokai X Asahi</strain>
        <tissue>Hemolymph</tissue>
    </source>
</reference>
<gene>
    <name type="primary">MOR2</name>
</gene>
<evidence type="ECO:0000269" key="1">
    <source>
    </source>
</evidence>
<evidence type="ECO:0000269" key="2">
    <source>
    </source>
</evidence>
<evidence type="ECO:0000305" key="3"/>
<sequence>MNILKLFFVFIVAMSLVSCSTAAPAKIPIKAIKTVGKAVGKGLRAINIASTANDVFNFLKPKKRKH</sequence>
<dbReference type="EMBL" id="AB014092">
    <property type="protein sequence ID" value="BAA34260.1"/>
    <property type="molecule type" value="mRNA"/>
</dbReference>
<dbReference type="EMBL" id="AB019538">
    <property type="protein sequence ID" value="BAA77338.1"/>
    <property type="molecule type" value="Genomic_DNA"/>
</dbReference>
<dbReference type="RefSeq" id="NP_001036829.2">
    <property type="nucleotide sequence ID" value="NM_001043364.2"/>
</dbReference>
<dbReference type="BMRB" id="O96059"/>
<dbReference type="SMR" id="O96059"/>
<dbReference type="STRING" id="7091.O96059"/>
<dbReference type="EnsemblMetazoa" id="NM_001043364.2">
    <property type="protein sequence ID" value="NP_001036829.2"/>
    <property type="gene ID" value="GeneID_692365"/>
</dbReference>
<dbReference type="GeneID" id="692365"/>
<dbReference type="KEGG" id="bmor:692365"/>
<dbReference type="CTD" id="41942"/>
<dbReference type="HOGENOM" id="CLU_206132_1_0_1"/>
<dbReference type="InParanoid" id="O96059"/>
<dbReference type="OrthoDB" id="361123at7088"/>
<dbReference type="Proteomes" id="UP000005204">
    <property type="component" value="Unassembled WGS sequence"/>
</dbReference>
<dbReference type="GO" id="GO:0005576">
    <property type="term" value="C:extracellular region"/>
    <property type="evidence" value="ECO:0007669"/>
    <property type="project" value="UniProtKB-SubCell"/>
</dbReference>
<dbReference type="GO" id="GO:0042742">
    <property type="term" value="P:defense response to bacterium"/>
    <property type="evidence" value="ECO:0007669"/>
    <property type="project" value="UniProtKB-KW"/>
</dbReference>
<dbReference type="GO" id="GO:0045087">
    <property type="term" value="P:innate immune response"/>
    <property type="evidence" value="ECO:0007669"/>
    <property type="project" value="UniProtKB-KW"/>
</dbReference>
<dbReference type="Gene3D" id="1.20.5.750">
    <property type="entry name" value="Moricin domain"/>
    <property type="match status" value="1"/>
</dbReference>
<dbReference type="InterPro" id="IPR009456">
    <property type="entry name" value="Moricin_fam"/>
</dbReference>
<dbReference type="InterPro" id="IPR037043">
    <property type="entry name" value="Moricin_sf"/>
</dbReference>
<dbReference type="Pfam" id="PF06451">
    <property type="entry name" value="Moricin"/>
    <property type="match status" value="1"/>
</dbReference>
<feature type="signal peptide" evidence="2">
    <location>
        <begin position="1"/>
        <end position="24"/>
    </location>
</feature>
<feature type="chain" id="PRO_0000004993" description="Moricin-2">
    <location>
        <begin position="25"/>
        <end position="66"/>
    </location>
</feature>
<keyword id="KW-0044">Antibiotic</keyword>
<keyword id="KW-0929">Antimicrobial</keyword>
<keyword id="KW-0903">Direct protein sequencing</keyword>
<keyword id="KW-0391">Immunity</keyword>
<keyword id="KW-0399">Innate immunity</keyword>
<keyword id="KW-1185">Reference proteome</keyword>
<keyword id="KW-0964">Secreted</keyword>
<keyword id="KW-0732">Signal</keyword>
<organism>
    <name type="scientific">Bombyx mori</name>
    <name type="common">Silk moth</name>
    <dbReference type="NCBI Taxonomy" id="7091"/>
    <lineage>
        <taxon>Eukaryota</taxon>
        <taxon>Metazoa</taxon>
        <taxon>Ecdysozoa</taxon>
        <taxon>Arthropoda</taxon>
        <taxon>Hexapoda</taxon>
        <taxon>Insecta</taxon>
        <taxon>Pterygota</taxon>
        <taxon>Neoptera</taxon>
        <taxon>Endopterygota</taxon>
        <taxon>Lepidoptera</taxon>
        <taxon>Glossata</taxon>
        <taxon>Ditrysia</taxon>
        <taxon>Bombycoidea</taxon>
        <taxon>Bombycidae</taxon>
        <taxon>Bombycinae</taxon>
        <taxon>Bombyx</taxon>
    </lineage>
</organism>